<comment type="function">
    <text evidence="1">Forms pores that allow passive diffusion of small molecules across the outer membrane.</text>
</comment>
<comment type="subunit">
    <text evidence="1">Homotrimer.</text>
</comment>
<comment type="subcellular location">
    <subcellularLocation>
        <location>Cell outer membrane</location>
        <topology>Multi-pass membrane protein</topology>
    </subcellularLocation>
</comment>
<comment type="similarity">
    <text evidence="2">Belongs to the Gram-negative porin family.</text>
</comment>
<accession>Q56828</accession>
<accession>D3VBL0</accession>
<dbReference type="EMBL" id="L40919">
    <property type="protein sequence ID" value="AAB41114.1"/>
    <property type="molecule type" value="Genomic_DNA"/>
</dbReference>
<dbReference type="EMBL" id="FN667742">
    <property type="protein sequence ID" value="CBJ89649.1"/>
    <property type="molecule type" value="Genomic_DNA"/>
</dbReference>
<dbReference type="PIR" id="S70847">
    <property type="entry name" value="S70847"/>
</dbReference>
<dbReference type="RefSeq" id="WP_013183934.1">
    <property type="nucleotide sequence ID" value="NC_014228.1"/>
</dbReference>
<dbReference type="SMR" id="Q56828"/>
<dbReference type="STRING" id="406817.XNC1_1586"/>
<dbReference type="TCDB" id="1.B.1.1.6">
    <property type="family name" value="the general bacterial porin (gbp) family"/>
</dbReference>
<dbReference type="GeneID" id="24902820"/>
<dbReference type="KEGG" id="xne:XNC1_1586"/>
<dbReference type="eggNOG" id="COG3203">
    <property type="taxonomic scope" value="Bacteria"/>
</dbReference>
<dbReference type="HOGENOM" id="CLU_058202_0_0_6"/>
<dbReference type="Proteomes" id="UP000008075">
    <property type="component" value="Chromosome"/>
</dbReference>
<dbReference type="GO" id="GO:0009279">
    <property type="term" value="C:cell outer membrane"/>
    <property type="evidence" value="ECO:0007669"/>
    <property type="project" value="UniProtKB-SubCell"/>
</dbReference>
<dbReference type="GO" id="GO:0046930">
    <property type="term" value="C:pore complex"/>
    <property type="evidence" value="ECO:0007669"/>
    <property type="project" value="UniProtKB-KW"/>
</dbReference>
<dbReference type="GO" id="GO:0015288">
    <property type="term" value="F:porin activity"/>
    <property type="evidence" value="ECO:0007669"/>
    <property type="project" value="UniProtKB-KW"/>
</dbReference>
<dbReference type="GO" id="GO:0034220">
    <property type="term" value="P:monoatomic ion transmembrane transport"/>
    <property type="evidence" value="ECO:0007669"/>
    <property type="project" value="InterPro"/>
</dbReference>
<dbReference type="CDD" id="cd00342">
    <property type="entry name" value="gram_neg_porins"/>
    <property type="match status" value="1"/>
</dbReference>
<dbReference type="Gene3D" id="2.40.160.10">
    <property type="entry name" value="Porin"/>
    <property type="match status" value="1"/>
</dbReference>
<dbReference type="InterPro" id="IPR050298">
    <property type="entry name" value="Gram-neg_bact_OMP"/>
</dbReference>
<dbReference type="InterPro" id="IPR033900">
    <property type="entry name" value="Gram_neg_porin_domain"/>
</dbReference>
<dbReference type="InterPro" id="IPR023614">
    <property type="entry name" value="Porin_dom_sf"/>
</dbReference>
<dbReference type="InterPro" id="IPR001897">
    <property type="entry name" value="Porin_gammaproteobac"/>
</dbReference>
<dbReference type="InterPro" id="IPR001702">
    <property type="entry name" value="Porin_Gram-ve"/>
</dbReference>
<dbReference type="InterPro" id="IPR013793">
    <property type="entry name" value="Porin_Gram-ve_CS"/>
</dbReference>
<dbReference type="PANTHER" id="PTHR34501:SF8">
    <property type="entry name" value="OUTER MEMBRANE PORIN N-RELATED"/>
    <property type="match status" value="1"/>
</dbReference>
<dbReference type="PANTHER" id="PTHR34501">
    <property type="entry name" value="PROTEIN YDDL-RELATED"/>
    <property type="match status" value="1"/>
</dbReference>
<dbReference type="Pfam" id="PF00267">
    <property type="entry name" value="Porin_1"/>
    <property type="match status" value="1"/>
</dbReference>
<dbReference type="PRINTS" id="PR00183">
    <property type="entry name" value="ECOLIPORIN"/>
</dbReference>
<dbReference type="PRINTS" id="PR00182">
    <property type="entry name" value="ECOLNEIPORIN"/>
</dbReference>
<dbReference type="SUPFAM" id="SSF56935">
    <property type="entry name" value="Porins"/>
    <property type="match status" value="1"/>
</dbReference>
<dbReference type="PROSITE" id="PS00576">
    <property type="entry name" value="GRAM_NEG_PORIN"/>
    <property type="match status" value="1"/>
</dbReference>
<feature type="signal peptide" evidence="1">
    <location>
        <begin position="1"/>
        <end position="21"/>
    </location>
</feature>
<feature type="chain" id="PRO_0000025240" description="Outer membrane porin F">
    <location>
        <begin position="22"/>
        <end position="369"/>
    </location>
</feature>
<feature type="transmembrane region" description="Beta stranded" evidence="1">
    <location>
        <begin position="22"/>
        <end position="27"/>
    </location>
</feature>
<feature type="topological domain" description="Periplasmic" evidence="1">
    <location>
        <position position="28"/>
    </location>
</feature>
<feature type="transmembrane region" description="Beta stranded" evidence="1">
    <location>
        <begin position="29"/>
        <end position="44"/>
    </location>
</feature>
<feature type="topological domain" description="Extracellular" evidence="1">
    <location>
        <begin position="45"/>
        <end position="55"/>
    </location>
</feature>
<feature type="transmembrane region" description="Beta stranded" evidence="1">
    <location>
        <begin position="56"/>
        <end position="68"/>
    </location>
</feature>
<feature type="topological domain" description="Periplasmic" evidence="1">
    <location>
        <begin position="69"/>
        <end position="70"/>
    </location>
</feature>
<feature type="transmembrane region" description="Beta stranded" evidence="1">
    <location>
        <begin position="71"/>
        <end position="83"/>
    </location>
</feature>
<feature type="topological domain" description="Extracellular" evidence="1">
    <location>
        <begin position="84"/>
        <end position="97"/>
    </location>
</feature>
<feature type="transmembrane region" description="Beta stranded" evidence="1">
    <location>
        <begin position="98"/>
        <end position="106"/>
    </location>
</feature>
<feature type="topological domain" description="Periplasmic" evidence="1">
    <location>
        <begin position="107"/>
        <end position="108"/>
    </location>
</feature>
<feature type="transmembrane region" description="Beta stranded" evidence="1">
    <location>
        <begin position="109"/>
        <end position="115"/>
    </location>
</feature>
<feature type="topological domain" description="Extracellular" evidence="1">
    <location>
        <begin position="116"/>
        <end position="150"/>
    </location>
</feature>
<feature type="transmembrane region" description="Beta stranded" evidence="1">
    <location>
        <begin position="151"/>
        <end position="157"/>
    </location>
</feature>
<feature type="topological domain" description="Periplasmic" evidence="1">
    <location>
        <begin position="158"/>
        <end position="165"/>
    </location>
</feature>
<feature type="transmembrane region" description="Beta stranded" evidence="1">
    <location>
        <begin position="166"/>
        <end position="177"/>
    </location>
</feature>
<feature type="topological domain" description="Extracellular" evidence="1">
    <location>
        <begin position="178"/>
        <end position="193"/>
    </location>
</feature>
<feature type="transmembrane region" description="Beta stranded" evidence="1">
    <location>
        <begin position="194"/>
        <end position="204"/>
    </location>
</feature>
<feature type="topological domain" description="Periplasmic" evidence="1">
    <location>
        <begin position="205"/>
        <end position="206"/>
    </location>
</feature>
<feature type="transmembrane region" description="Beta stranded" evidence="1">
    <location>
        <begin position="207"/>
        <end position="219"/>
    </location>
</feature>
<feature type="topological domain" description="Extracellular" evidence="1">
    <location>
        <begin position="220"/>
        <end position="234"/>
    </location>
</feature>
<feature type="transmembrane region" description="Beta stranded" evidence="1">
    <location>
        <begin position="235"/>
        <end position="246"/>
    </location>
</feature>
<feature type="topological domain" description="Periplasmic" evidence="1">
    <location>
        <position position="247"/>
    </location>
</feature>
<feature type="transmembrane region" description="Beta stranded" evidence="1">
    <location>
        <begin position="248"/>
        <end position="259"/>
    </location>
</feature>
<feature type="topological domain" description="Extracellular" evidence="1">
    <location>
        <begin position="260"/>
        <end position="278"/>
    </location>
</feature>
<feature type="transmembrane region" description="Beta stranded" evidence="1">
    <location>
        <begin position="279"/>
        <end position="291"/>
    </location>
</feature>
<feature type="topological domain" description="Periplasmic" evidence="1">
    <location>
        <begin position="292"/>
        <end position="294"/>
    </location>
</feature>
<feature type="transmembrane region" description="Beta stranded" evidence="1">
    <location>
        <begin position="295"/>
        <end position="308"/>
    </location>
</feature>
<feature type="topological domain" description="Extracellular" evidence="1">
    <location>
        <begin position="309"/>
        <end position="320"/>
    </location>
</feature>
<feature type="transmembrane region" description="Beta stranded" evidence="1">
    <location>
        <begin position="321"/>
        <end position="332"/>
    </location>
</feature>
<feature type="topological domain" description="Periplasmic" evidence="1">
    <location>
        <begin position="333"/>
        <end position="334"/>
    </location>
</feature>
<feature type="transmembrane region" description="Beta stranded" evidence="1">
    <location>
        <begin position="335"/>
        <end position="344"/>
    </location>
</feature>
<feature type="topological domain" description="Extracellular" evidence="1">
    <location>
        <begin position="345"/>
        <end position="359"/>
    </location>
</feature>
<feature type="transmembrane region" description="Beta stranded" evidence="1">
    <location>
        <begin position="360"/>
        <end position="369"/>
    </location>
</feature>
<feature type="sequence conflict" description="In Ref. 1; AAB41114." evidence="2" ref="1">
    <original>G</original>
    <variation>R</variation>
    <location>
        <position position="118"/>
    </location>
</feature>
<feature type="sequence conflict" description="In Ref. 1; AAB41114." evidence="2" ref="1">
    <original>A</original>
    <variation>P</variation>
    <location>
        <position position="137"/>
    </location>
</feature>
<feature type="sequence conflict" description="In Ref. 1; AAB41114." evidence="2" ref="1">
    <original>A</original>
    <variation>R</variation>
    <location>
        <position position="170"/>
    </location>
</feature>
<organism>
    <name type="scientific">Xenorhabdus nematophila (strain ATCC 19061 / DSM 3370 / CCUG 14189 / LMG 1036 / NCIMB 9965 / AN6)</name>
    <dbReference type="NCBI Taxonomy" id="406817"/>
    <lineage>
        <taxon>Bacteria</taxon>
        <taxon>Pseudomonadati</taxon>
        <taxon>Pseudomonadota</taxon>
        <taxon>Gammaproteobacteria</taxon>
        <taxon>Enterobacterales</taxon>
        <taxon>Morganellaceae</taxon>
        <taxon>Xenorhabdus</taxon>
    </lineage>
</organism>
<proteinExistence type="inferred from homology"/>
<gene>
    <name type="primary">ompF</name>
    <name type="synonym">opnP</name>
    <name type="ordered locus">XNC1_1586</name>
</gene>
<protein>
    <recommendedName>
        <fullName>Outer membrane porin F</fullName>
    </recommendedName>
    <alternativeName>
        <fullName>Outer membrane protein F</fullName>
    </alternativeName>
    <alternativeName>
        <fullName>Outer membrane protein OpnP</fullName>
    </alternativeName>
    <alternativeName>
        <fullName>Porin OmpF</fullName>
    </alternativeName>
</protein>
<sequence>MKRNILAVVIPALLVAGTANAAEIFNKDGNKLDLYGKVDVRHQFADKRSSEDGDDSYARIGIKGETQISDQLTGFGRWEYNVKAKGTEAAVAESSTRLAFAGLKFANYGSLDYGRNYGVNYDVNAWTDVLPIFGGDAMAQTDNFMTGRSTGLLTYRNTDFFGLVDGLNFALQYQGQNSDRTKNKGRDTERSNGDGYGLSSTYDVGYGITVGGSYANSARTADQKEKVSDAYGKRAEAWNIGAKYDANNVYLAAMYGETRNMTRYTRTIADTDATLIANKTQNIELTAQYLFSDLGLKPSLAYVQSKGKDLTEGKGFNGDLVKYVSVGTYYYFNKNLSTYVDYKINLLKKDNELGVNARNVFGVGLTYQF</sequence>
<keyword id="KW-0998">Cell outer membrane</keyword>
<keyword id="KW-0406">Ion transport</keyword>
<keyword id="KW-0472">Membrane</keyword>
<keyword id="KW-0626">Porin</keyword>
<keyword id="KW-1185">Reference proteome</keyword>
<keyword id="KW-0732">Signal</keyword>
<keyword id="KW-0812">Transmembrane</keyword>
<keyword id="KW-1134">Transmembrane beta strand</keyword>
<keyword id="KW-0813">Transport</keyword>
<name>OMPF_XENNA</name>
<reference key="1">
    <citation type="journal article" date="1995" name="Mol. Microbiol.">
        <title>Functional and regulatory analysis of the OmpF-like porin, OpnP, of the symbiotic bacterium Xenorhabdus nematophilus.</title>
        <authorList>
            <person name="Forst S."/>
            <person name="Waukau J."/>
            <person name="Leisman G."/>
            <person name="Exner M."/>
            <person name="Hancock R."/>
        </authorList>
    </citation>
    <scope>NUCLEOTIDE SEQUENCE [GENOMIC DNA]</scope>
    <source>
        <strain>ATCC 19061 / DSM 3370 / CCUG 14189 / LMG 1036 / NCIMB 9965 / AN6</strain>
    </source>
</reference>
<reference key="2">
    <citation type="journal article" date="2011" name="PLoS ONE">
        <title>The entomopathogenic bacterial endosymbionts xenorhabdus and photorhabdus: convergent lifestyles from divergent genomes.</title>
        <authorList>
            <person name="Chaston J.M."/>
            <person name="Suen G."/>
            <person name="Tucker S.L."/>
            <person name="Andersen A.W."/>
            <person name="Bhasin A."/>
            <person name="Bode E."/>
            <person name="Bode H.B."/>
            <person name="Brachmann A.O."/>
            <person name="Cowles C.E."/>
            <person name="Cowles K.N."/>
            <person name="Darby C."/>
            <person name="de Leon L."/>
            <person name="Drace K."/>
            <person name="Du Z."/>
            <person name="Givaudan A."/>
            <person name="Herbert Tran E.E."/>
            <person name="Jewell K.A."/>
            <person name="Knack J.J."/>
            <person name="Krasomil-Osterfeld K.C."/>
            <person name="Kukor R."/>
            <person name="Lanois A."/>
            <person name="Latreille P."/>
            <person name="Leimgruber N.K."/>
            <person name="Lipke C.M."/>
            <person name="Liu R."/>
            <person name="Lu X."/>
            <person name="Martens E.C."/>
            <person name="Marri P.R."/>
            <person name="Medigue C."/>
            <person name="Menard M.L."/>
            <person name="Miller N.M."/>
            <person name="Morales-Soto N."/>
            <person name="Norton S."/>
            <person name="Ogier J.C."/>
            <person name="Orchard S.S."/>
            <person name="Park D."/>
            <person name="Park Y."/>
            <person name="Qurollo B.A."/>
            <person name="Sugar D.R."/>
            <person name="Richards G.R."/>
            <person name="Rouy Z."/>
            <person name="Slominski B."/>
            <person name="Slominski K."/>
            <person name="Snyder H."/>
            <person name="Tjaden B.C."/>
            <person name="van der Hoeven R."/>
            <person name="Welch R.D."/>
            <person name="Wheeler C."/>
            <person name="Xiang B."/>
            <person name="Barbazuk B."/>
            <person name="Gaudriault S."/>
            <person name="Goodner B."/>
            <person name="Slater S.C."/>
            <person name="Forst S."/>
            <person name="Goldman B.S."/>
            <person name="Goodrich-Blair H."/>
        </authorList>
    </citation>
    <scope>NUCLEOTIDE SEQUENCE [LARGE SCALE GENOMIC DNA]</scope>
    <source>
        <strain>ATCC 19061 / DSM 3370 / CCUG 14189 / LMG 1036 / NCIMB 9965 / AN6</strain>
    </source>
</reference>
<evidence type="ECO:0000250" key="1"/>
<evidence type="ECO:0000305" key="2"/>